<sequence length="458" mass="51859">MKKLWGGRFTKTAAQWVDDFGASIHFDQQLVEEDIEGSIAHVTMLGECGILPKEDVETIKKGLTKLLEKAKRGELSFSVTYEDIHLNIEKMLIDEIGPVGGKLHTGRSRNDQVATDMHLYLRKRVIEIIELIRQLQRVLVEKAEQHIETLIPGYTHLQRAQPISFAHHLMAYVWMFERDRERFAESLKRMNKSPLGAGALAGTTFPIDRHLTARLLGFDGIYENSLDAVSDRDFIIEFLSNSSILMMHLSRFCEELILWSSQEFQFIEMDDTFATGSSIMPQKKNPDMAELIRGKTGRVYGHLMALLTVMKGLPLAYNKDMQEDKEGMFDTVQTVIGSLNIFAGMIETMTIRTDVMEKATKQDFSNATELADYLAKKGVPFREAHEIVGKLVLTCIERGVFLADLPLHVYQQASPLFEEDIYEALNPYTAVNRRTSAGGTGFTEVKKAIEKAKQMIEA</sequence>
<proteinExistence type="inferred from homology"/>
<dbReference type="EC" id="4.3.2.1" evidence="1"/>
<dbReference type="EMBL" id="CP000922">
    <property type="protein sequence ID" value="ACJ32867.1"/>
    <property type="molecule type" value="Genomic_DNA"/>
</dbReference>
<dbReference type="RefSeq" id="WP_012574188.1">
    <property type="nucleotide sequence ID" value="NC_011567.1"/>
</dbReference>
<dbReference type="SMR" id="B7GGR5"/>
<dbReference type="STRING" id="491915.Aflv_0483"/>
<dbReference type="GeneID" id="7036740"/>
<dbReference type="KEGG" id="afl:Aflv_0483"/>
<dbReference type="PATRIC" id="fig|491915.6.peg.495"/>
<dbReference type="eggNOG" id="COG0165">
    <property type="taxonomic scope" value="Bacteria"/>
</dbReference>
<dbReference type="HOGENOM" id="CLU_027272_2_3_9"/>
<dbReference type="UniPathway" id="UPA00068">
    <property type="reaction ID" value="UER00114"/>
</dbReference>
<dbReference type="Proteomes" id="UP000000742">
    <property type="component" value="Chromosome"/>
</dbReference>
<dbReference type="GO" id="GO:0005829">
    <property type="term" value="C:cytosol"/>
    <property type="evidence" value="ECO:0007669"/>
    <property type="project" value="TreeGrafter"/>
</dbReference>
<dbReference type="GO" id="GO:0004056">
    <property type="term" value="F:argininosuccinate lyase activity"/>
    <property type="evidence" value="ECO:0007669"/>
    <property type="project" value="UniProtKB-UniRule"/>
</dbReference>
<dbReference type="GO" id="GO:0042450">
    <property type="term" value="P:arginine biosynthetic process via ornithine"/>
    <property type="evidence" value="ECO:0007669"/>
    <property type="project" value="InterPro"/>
</dbReference>
<dbReference type="GO" id="GO:0006526">
    <property type="term" value="P:L-arginine biosynthetic process"/>
    <property type="evidence" value="ECO:0007669"/>
    <property type="project" value="UniProtKB-UniRule"/>
</dbReference>
<dbReference type="CDD" id="cd01359">
    <property type="entry name" value="Argininosuccinate_lyase"/>
    <property type="match status" value="1"/>
</dbReference>
<dbReference type="FunFam" id="1.10.275.10:FF:000002">
    <property type="entry name" value="Argininosuccinate lyase"/>
    <property type="match status" value="1"/>
</dbReference>
<dbReference type="FunFam" id="1.10.40.30:FF:000001">
    <property type="entry name" value="Argininosuccinate lyase"/>
    <property type="match status" value="1"/>
</dbReference>
<dbReference type="FunFam" id="1.20.200.10:FF:000006">
    <property type="entry name" value="Argininosuccinate lyase"/>
    <property type="match status" value="1"/>
</dbReference>
<dbReference type="Gene3D" id="1.10.40.30">
    <property type="entry name" value="Fumarase/aspartase (C-terminal domain)"/>
    <property type="match status" value="1"/>
</dbReference>
<dbReference type="Gene3D" id="1.20.200.10">
    <property type="entry name" value="Fumarase/aspartase (Central domain)"/>
    <property type="match status" value="1"/>
</dbReference>
<dbReference type="Gene3D" id="1.10.275.10">
    <property type="entry name" value="Fumarase/aspartase (N-terminal domain)"/>
    <property type="match status" value="1"/>
</dbReference>
<dbReference type="HAMAP" id="MF_00006">
    <property type="entry name" value="Arg_succ_lyase"/>
    <property type="match status" value="1"/>
</dbReference>
<dbReference type="InterPro" id="IPR029419">
    <property type="entry name" value="Arg_succ_lyase_C"/>
</dbReference>
<dbReference type="InterPro" id="IPR009049">
    <property type="entry name" value="Argininosuccinate_lyase"/>
</dbReference>
<dbReference type="InterPro" id="IPR024083">
    <property type="entry name" value="Fumarase/histidase_N"/>
</dbReference>
<dbReference type="InterPro" id="IPR020557">
    <property type="entry name" value="Fumarate_lyase_CS"/>
</dbReference>
<dbReference type="InterPro" id="IPR000362">
    <property type="entry name" value="Fumarate_lyase_fam"/>
</dbReference>
<dbReference type="InterPro" id="IPR022761">
    <property type="entry name" value="Fumarate_lyase_N"/>
</dbReference>
<dbReference type="InterPro" id="IPR008948">
    <property type="entry name" value="L-Aspartase-like"/>
</dbReference>
<dbReference type="NCBIfam" id="TIGR00838">
    <property type="entry name" value="argH"/>
    <property type="match status" value="1"/>
</dbReference>
<dbReference type="PANTHER" id="PTHR43814">
    <property type="entry name" value="ARGININOSUCCINATE LYASE"/>
    <property type="match status" value="1"/>
</dbReference>
<dbReference type="PANTHER" id="PTHR43814:SF1">
    <property type="entry name" value="ARGININOSUCCINATE LYASE"/>
    <property type="match status" value="1"/>
</dbReference>
<dbReference type="Pfam" id="PF14698">
    <property type="entry name" value="ASL_C2"/>
    <property type="match status" value="1"/>
</dbReference>
<dbReference type="Pfam" id="PF00206">
    <property type="entry name" value="Lyase_1"/>
    <property type="match status" value="1"/>
</dbReference>
<dbReference type="PRINTS" id="PR00145">
    <property type="entry name" value="ARGSUCLYASE"/>
</dbReference>
<dbReference type="PRINTS" id="PR00149">
    <property type="entry name" value="FUMRATELYASE"/>
</dbReference>
<dbReference type="SUPFAM" id="SSF48557">
    <property type="entry name" value="L-aspartase-like"/>
    <property type="match status" value="1"/>
</dbReference>
<dbReference type="PROSITE" id="PS00163">
    <property type="entry name" value="FUMARATE_LYASES"/>
    <property type="match status" value="1"/>
</dbReference>
<gene>
    <name evidence="1" type="primary">argH</name>
    <name type="ordered locus">Aflv_0483</name>
</gene>
<evidence type="ECO:0000255" key="1">
    <source>
        <dbReference type="HAMAP-Rule" id="MF_00006"/>
    </source>
</evidence>
<keyword id="KW-0028">Amino-acid biosynthesis</keyword>
<keyword id="KW-0055">Arginine biosynthesis</keyword>
<keyword id="KW-0963">Cytoplasm</keyword>
<keyword id="KW-0456">Lyase</keyword>
<name>ARLY_ANOFW</name>
<reference key="1">
    <citation type="journal article" date="2008" name="Genome Biol.">
        <title>Encapsulated in silica: genome, proteome and physiology of the thermophilic bacterium Anoxybacillus flavithermus WK1.</title>
        <authorList>
            <person name="Saw J.H."/>
            <person name="Mountain B.W."/>
            <person name="Feng L."/>
            <person name="Omelchenko M.V."/>
            <person name="Hou S."/>
            <person name="Saito J.A."/>
            <person name="Stott M.B."/>
            <person name="Li D."/>
            <person name="Zhao G."/>
            <person name="Wu J."/>
            <person name="Galperin M.Y."/>
            <person name="Koonin E.V."/>
            <person name="Makarova K.S."/>
            <person name="Wolf Y.I."/>
            <person name="Rigden D.J."/>
            <person name="Dunfield P.F."/>
            <person name="Wang L."/>
            <person name="Alam M."/>
        </authorList>
    </citation>
    <scope>NUCLEOTIDE SEQUENCE [LARGE SCALE GENOMIC DNA]</scope>
    <source>
        <strain>DSM 21510 / WK1</strain>
    </source>
</reference>
<protein>
    <recommendedName>
        <fullName evidence="1">Argininosuccinate lyase</fullName>
        <shortName evidence="1">ASAL</shortName>
        <ecNumber evidence="1">4.3.2.1</ecNumber>
    </recommendedName>
    <alternativeName>
        <fullName evidence="1">Arginosuccinase</fullName>
    </alternativeName>
</protein>
<accession>B7GGR5</accession>
<feature type="chain" id="PRO_1000116195" description="Argininosuccinate lyase">
    <location>
        <begin position="1"/>
        <end position="458"/>
    </location>
</feature>
<comment type="catalytic activity">
    <reaction evidence="1">
        <text>2-(N(omega)-L-arginino)succinate = fumarate + L-arginine</text>
        <dbReference type="Rhea" id="RHEA:24020"/>
        <dbReference type="ChEBI" id="CHEBI:29806"/>
        <dbReference type="ChEBI" id="CHEBI:32682"/>
        <dbReference type="ChEBI" id="CHEBI:57472"/>
        <dbReference type="EC" id="4.3.2.1"/>
    </reaction>
</comment>
<comment type="pathway">
    <text evidence="1">Amino-acid biosynthesis; L-arginine biosynthesis; L-arginine from L-ornithine and carbamoyl phosphate: step 3/3.</text>
</comment>
<comment type="subcellular location">
    <subcellularLocation>
        <location evidence="1">Cytoplasm</location>
    </subcellularLocation>
</comment>
<comment type="similarity">
    <text evidence="1">Belongs to the lyase 1 family. Argininosuccinate lyase subfamily.</text>
</comment>
<organism>
    <name type="scientific">Anoxybacillus flavithermus (strain DSM 21510 / WK1)</name>
    <dbReference type="NCBI Taxonomy" id="491915"/>
    <lineage>
        <taxon>Bacteria</taxon>
        <taxon>Bacillati</taxon>
        <taxon>Bacillota</taxon>
        <taxon>Bacilli</taxon>
        <taxon>Bacillales</taxon>
        <taxon>Anoxybacillaceae</taxon>
        <taxon>Anoxybacillus</taxon>
    </lineage>
</organism>